<feature type="initiator methionine" description="Removed" evidence="1">
    <location>
        <position position="1"/>
    </location>
</feature>
<feature type="chain" id="PRO_0000331477" description="Etoposide-induced protein 2.4 homolog">
    <location>
        <begin position="2"/>
        <end position="340"/>
    </location>
</feature>
<feature type="transmembrane region" description="Helical" evidence="4">
    <location>
        <begin position="77"/>
        <end position="97"/>
    </location>
</feature>
<feature type="transmembrane region" description="Helical" evidence="4">
    <location>
        <begin position="117"/>
        <end position="137"/>
    </location>
</feature>
<feature type="transmembrane region" description="Helical" evidence="4">
    <location>
        <begin position="179"/>
        <end position="199"/>
    </location>
</feature>
<feature type="transmembrane region" description="Helical" evidence="4">
    <location>
        <begin position="238"/>
        <end position="255"/>
    </location>
</feature>
<feature type="transmembrane region" description="Helical" evidence="4">
    <location>
        <begin position="257"/>
        <end position="277"/>
    </location>
</feature>
<feature type="region of interest" description="Disordered" evidence="5">
    <location>
        <begin position="320"/>
        <end position="340"/>
    </location>
</feature>
<feature type="modified residue" description="N-acetylalanine" evidence="1">
    <location>
        <position position="2"/>
    </location>
</feature>
<feature type="modified residue" description="Phosphoserine" evidence="2">
    <location>
        <position position="46"/>
    </location>
</feature>
<feature type="modified residue" description="Phosphoserine" evidence="2">
    <location>
        <position position="47"/>
    </location>
</feature>
<feature type="modified residue" description="Phosphoserine" evidence="1">
    <location>
        <position position="56"/>
    </location>
</feature>
<feature type="modified residue" description="Phosphoserine" evidence="3">
    <location>
        <position position="320"/>
    </location>
</feature>
<feature type="modified residue" description="Phosphoserine" evidence="1">
    <location>
        <position position="326"/>
    </location>
</feature>
<feature type="modified residue" description="Phosphoserine" evidence="1">
    <location>
        <position position="330"/>
    </location>
</feature>
<sequence length="340" mass="38922">MADSVKTFLQDLARGIKDSIWGICTISKLDARIQQKREEQRRRRASSILAQRRAQSIERKQESEPRIVSRIFQCCAWNGGVFWFSLLLFYRVFIPVLQSVTAQIIGDPSLHGDVWSWLEFFLTSIFSALWVLPLFVLSKVVNAIWFQDIADLAFEVSGRKPHPFPSVSKIIADMLFNLLLQALFLLQGMFVSLFPIHLVGQLVSLLHMSLLYSLYCFEYRWFNKGIEMHQRLSNIERNWPYYFGFGLPLAFLTAMQSSYIVSGCLFSILFPLFIISANEAKTPGKAYLFQLRLFSLVVFLSNRLFHKTVYLQSALSSSTSAEKLPSPHPSPAKLKAATGR</sequence>
<dbReference type="EMBL" id="BC123793">
    <property type="protein sequence ID" value="AAI23794.1"/>
    <property type="molecule type" value="mRNA"/>
</dbReference>
<dbReference type="RefSeq" id="NP_001069433.1">
    <property type="nucleotide sequence ID" value="NM_001075965.1"/>
</dbReference>
<dbReference type="FunCoup" id="Q08DE5">
    <property type="interactions" value="1613"/>
</dbReference>
<dbReference type="STRING" id="9913.ENSBTAP00000009476"/>
<dbReference type="PaxDb" id="9913-ENSBTAP00000009476"/>
<dbReference type="GeneID" id="532527"/>
<dbReference type="KEGG" id="bta:532527"/>
<dbReference type="CTD" id="9538"/>
<dbReference type="eggNOG" id="KOG3966">
    <property type="taxonomic scope" value="Eukaryota"/>
</dbReference>
<dbReference type="InParanoid" id="Q08DE5"/>
<dbReference type="OrthoDB" id="266518at2759"/>
<dbReference type="Proteomes" id="UP000009136">
    <property type="component" value="Unplaced"/>
</dbReference>
<dbReference type="GO" id="GO:0005783">
    <property type="term" value="C:endoplasmic reticulum"/>
    <property type="evidence" value="ECO:0000318"/>
    <property type="project" value="GO_Central"/>
</dbReference>
<dbReference type="GO" id="GO:0016020">
    <property type="term" value="C:membrane"/>
    <property type="evidence" value="ECO:0007669"/>
    <property type="project" value="UniProtKB-SubCell"/>
</dbReference>
<dbReference type="GO" id="GO:0016236">
    <property type="term" value="P:macroautophagy"/>
    <property type="evidence" value="ECO:0000318"/>
    <property type="project" value="GO_Central"/>
</dbReference>
<dbReference type="PANTHER" id="PTHR21389:SF0">
    <property type="entry name" value="ETOPOSIDE-INDUCED PROTEIN 2.4 HOMOLOG"/>
    <property type="match status" value="1"/>
</dbReference>
<dbReference type="PANTHER" id="PTHR21389">
    <property type="entry name" value="P53 INDUCED PROTEIN"/>
    <property type="match status" value="1"/>
</dbReference>
<dbReference type="Pfam" id="PF07264">
    <property type="entry name" value="EI24"/>
    <property type="match status" value="1"/>
</dbReference>
<keyword id="KW-0007">Acetylation</keyword>
<keyword id="KW-0472">Membrane</keyword>
<keyword id="KW-0597">Phosphoprotein</keyword>
<keyword id="KW-1185">Reference proteome</keyword>
<keyword id="KW-0812">Transmembrane</keyword>
<keyword id="KW-1133">Transmembrane helix</keyword>
<evidence type="ECO:0000250" key="1">
    <source>
        <dbReference type="UniProtKB" id="O14681"/>
    </source>
</evidence>
<evidence type="ECO:0000250" key="2">
    <source>
        <dbReference type="UniProtKB" id="Q4KM77"/>
    </source>
</evidence>
<evidence type="ECO:0000250" key="3">
    <source>
        <dbReference type="UniProtKB" id="Q61070"/>
    </source>
</evidence>
<evidence type="ECO:0000255" key="4"/>
<evidence type="ECO:0000256" key="5">
    <source>
        <dbReference type="SAM" id="MobiDB-lite"/>
    </source>
</evidence>
<evidence type="ECO:0000305" key="6"/>
<reference key="1">
    <citation type="submission" date="2006-09" db="EMBL/GenBank/DDBJ databases">
        <authorList>
            <consortium name="NIH - Mammalian Gene Collection (MGC) project"/>
        </authorList>
    </citation>
    <scope>NUCLEOTIDE SEQUENCE [LARGE SCALE MRNA]</scope>
    <source>
        <strain>Hereford</strain>
        <tissue>Fetal skin</tissue>
    </source>
</reference>
<name>EI24_BOVIN</name>
<comment type="subcellular location">
    <subcellularLocation>
        <location evidence="6">Membrane</location>
        <topology evidence="6">Multi-pass membrane protein</topology>
    </subcellularLocation>
</comment>
<comment type="similarity">
    <text evidence="6">Belongs to the EI24 family.</text>
</comment>
<accession>Q08DE5</accession>
<proteinExistence type="evidence at transcript level"/>
<organism>
    <name type="scientific">Bos taurus</name>
    <name type="common">Bovine</name>
    <dbReference type="NCBI Taxonomy" id="9913"/>
    <lineage>
        <taxon>Eukaryota</taxon>
        <taxon>Metazoa</taxon>
        <taxon>Chordata</taxon>
        <taxon>Craniata</taxon>
        <taxon>Vertebrata</taxon>
        <taxon>Euteleostomi</taxon>
        <taxon>Mammalia</taxon>
        <taxon>Eutheria</taxon>
        <taxon>Laurasiatheria</taxon>
        <taxon>Artiodactyla</taxon>
        <taxon>Ruminantia</taxon>
        <taxon>Pecora</taxon>
        <taxon>Bovidae</taxon>
        <taxon>Bovinae</taxon>
        <taxon>Bos</taxon>
    </lineage>
</organism>
<gene>
    <name type="primary">EI24</name>
</gene>
<protein>
    <recommendedName>
        <fullName>Etoposide-induced protein 2.4 homolog</fullName>
    </recommendedName>
</protein>